<dbReference type="EMBL" id="CU928171">
    <property type="protein sequence ID" value="CAR24651.1"/>
    <property type="molecule type" value="Genomic_DNA"/>
</dbReference>
<dbReference type="RefSeq" id="XP_002555088.1">
    <property type="nucleotide sequence ID" value="XM_002555042.1"/>
</dbReference>
<dbReference type="SMR" id="C5DLJ0"/>
<dbReference type="FunCoup" id="C5DLJ0">
    <property type="interactions" value="28"/>
</dbReference>
<dbReference type="STRING" id="559295.C5DLJ0"/>
<dbReference type="GeneID" id="8293346"/>
<dbReference type="KEGG" id="lth:KLTH0G01100g"/>
<dbReference type="eggNOG" id="ENOG502S7AE">
    <property type="taxonomic scope" value="Eukaryota"/>
</dbReference>
<dbReference type="HOGENOM" id="CLU_079666_0_0_1"/>
<dbReference type="InParanoid" id="C5DLJ0"/>
<dbReference type="OMA" id="GMESACT"/>
<dbReference type="OrthoDB" id="10261384at2759"/>
<dbReference type="Proteomes" id="UP000002036">
    <property type="component" value="Chromosome G"/>
</dbReference>
<dbReference type="GO" id="GO:0030674">
    <property type="term" value="F:protein-macromolecule adaptor activity"/>
    <property type="evidence" value="ECO:0007669"/>
    <property type="project" value="TreeGrafter"/>
</dbReference>
<dbReference type="GO" id="GO:0016192">
    <property type="term" value="P:vesicle-mediated transport"/>
    <property type="evidence" value="ECO:0007669"/>
    <property type="project" value="InterPro"/>
</dbReference>
<dbReference type="Gene3D" id="3.40.50.11960">
    <property type="match status" value="1"/>
</dbReference>
<dbReference type="InterPro" id="IPR034627">
    <property type="entry name" value="Irc6"/>
</dbReference>
<dbReference type="PANTHER" id="PTHR28043">
    <property type="entry name" value="INCREASED RECOMBINATION CENTERS PROTEIN 6"/>
    <property type="match status" value="1"/>
</dbReference>
<dbReference type="PANTHER" id="PTHR28043:SF1">
    <property type="entry name" value="INCREASED RECOMBINATION CENTERS PROTEIN 6"/>
    <property type="match status" value="1"/>
</dbReference>
<keyword id="KW-0160">Chromosomal rearrangement</keyword>
<keyword id="KW-1185">Reference proteome</keyword>
<proteinExistence type="inferred from homology"/>
<sequence>MTTGLSLDEGKVIEGRPKALRDKVLIVFSNKVFNREEILFEVFGVEDNAGKQVHRGVDWTTKYYTVTIDVYVDSFSNLEDWTNEFCDPDFDELRDVIAGWIIVLPFSGNIEEETKALSRLVNNATSEDFFTAILATELNVGKNERAFLEYNVLAGAVELVHNELDSDGELKEVNGVDRVKEIIDTCDWHPRLLRTAHLESETGMESACTGISLAQIMGSLREARTKYMAMDPGLDREEFANEMANELSKLL</sequence>
<feature type="chain" id="PRO_0000399223" description="Increased recombination centers protein 6">
    <location>
        <begin position="1"/>
        <end position="251"/>
    </location>
</feature>
<evidence type="ECO:0000250" key="1"/>
<evidence type="ECO:0000305" key="2"/>
<protein>
    <recommendedName>
        <fullName>Increased recombination centers protein 6</fullName>
    </recommendedName>
</protein>
<organism>
    <name type="scientific">Lachancea thermotolerans (strain ATCC 56472 / CBS 6340 / NRRL Y-8284)</name>
    <name type="common">Yeast</name>
    <name type="synonym">Kluyveromyces thermotolerans</name>
    <dbReference type="NCBI Taxonomy" id="559295"/>
    <lineage>
        <taxon>Eukaryota</taxon>
        <taxon>Fungi</taxon>
        <taxon>Dikarya</taxon>
        <taxon>Ascomycota</taxon>
        <taxon>Saccharomycotina</taxon>
        <taxon>Saccharomycetes</taxon>
        <taxon>Saccharomycetales</taxon>
        <taxon>Saccharomycetaceae</taxon>
        <taxon>Lachancea</taxon>
    </lineage>
</organism>
<name>IRC6_LACTC</name>
<reference key="1">
    <citation type="journal article" date="2009" name="Genome Res.">
        <title>Comparative genomics of protoploid Saccharomycetaceae.</title>
        <authorList>
            <consortium name="The Genolevures Consortium"/>
            <person name="Souciet J.-L."/>
            <person name="Dujon B."/>
            <person name="Gaillardin C."/>
            <person name="Johnston M."/>
            <person name="Baret P.V."/>
            <person name="Cliften P."/>
            <person name="Sherman D.J."/>
            <person name="Weissenbach J."/>
            <person name="Westhof E."/>
            <person name="Wincker P."/>
            <person name="Jubin C."/>
            <person name="Poulain J."/>
            <person name="Barbe V."/>
            <person name="Segurens B."/>
            <person name="Artiguenave F."/>
            <person name="Anthouard V."/>
            <person name="Vacherie B."/>
            <person name="Val M.-E."/>
            <person name="Fulton R.S."/>
            <person name="Minx P."/>
            <person name="Wilson R."/>
            <person name="Durrens P."/>
            <person name="Jean G."/>
            <person name="Marck C."/>
            <person name="Martin T."/>
            <person name="Nikolski M."/>
            <person name="Rolland T."/>
            <person name="Seret M.-L."/>
            <person name="Casaregola S."/>
            <person name="Despons L."/>
            <person name="Fairhead C."/>
            <person name="Fischer G."/>
            <person name="Lafontaine I."/>
            <person name="Leh V."/>
            <person name="Lemaire M."/>
            <person name="de Montigny J."/>
            <person name="Neuveglise C."/>
            <person name="Thierry A."/>
            <person name="Blanc-Lenfle I."/>
            <person name="Bleykasten C."/>
            <person name="Diffels J."/>
            <person name="Fritsch E."/>
            <person name="Frangeul L."/>
            <person name="Goeffon A."/>
            <person name="Jauniaux N."/>
            <person name="Kachouri-Lafond R."/>
            <person name="Payen C."/>
            <person name="Potier S."/>
            <person name="Pribylova L."/>
            <person name="Ozanne C."/>
            <person name="Richard G.-F."/>
            <person name="Sacerdot C."/>
            <person name="Straub M.-L."/>
            <person name="Talla E."/>
        </authorList>
    </citation>
    <scope>NUCLEOTIDE SEQUENCE [LARGE SCALE GENOMIC DNA]</scope>
    <source>
        <strain>ATCC 56472 / CBS 6340 / NRRL Y-8284</strain>
    </source>
</reference>
<comment type="function">
    <text evidence="1">Involved in gross chromosomal rearrangements (GCRs) and telomere healing.</text>
</comment>
<comment type="similarity">
    <text evidence="2">Belongs to the IRC6 family.</text>
</comment>
<gene>
    <name type="primary">IRC6</name>
    <name type="ordered locus">KLTH0G01100g</name>
</gene>
<accession>C5DLJ0</accession>